<feature type="initiator methionine" description="Removed" evidence="1">
    <location>
        <position position="1"/>
    </location>
</feature>
<feature type="chain" id="PRO_0000216569" description="Trimethylamine methyltransferase MttB">
    <location>
        <begin position="2"/>
        <end position="495"/>
    </location>
</feature>
<feature type="non-standard amino acid" description="Pyrrolysine" evidence="2">
    <location>
        <position position="334"/>
    </location>
</feature>
<feature type="strand" evidence="7">
    <location>
        <begin position="10"/>
        <end position="15"/>
    </location>
</feature>
<feature type="strand" evidence="7">
    <location>
        <begin position="17"/>
        <end position="19"/>
    </location>
</feature>
<feature type="helix" evidence="7">
    <location>
        <begin position="23"/>
        <end position="38"/>
    </location>
</feature>
<feature type="strand" evidence="7">
    <location>
        <begin position="42"/>
        <end position="44"/>
    </location>
</feature>
<feature type="helix" evidence="7">
    <location>
        <begin position="47"/>
        <end position="55"/>
    </location>
</feature>
<feature type="strand" evidence="8">
    <location>
        <begin position="59"/>
        <end position="61"/>
    </location>
</feature>
<feature type="turn" evidence="7">
    <location>
        <begin position="62"/>
        <end position="64"/>
    </location>
</feature>
<feature type="strand" evidence="7">
    <location>
        <begin position="66"/>
        <end position="68"/>
    </location>
</feature>
<feature type="helix" evidence="7">
    <location>
        <begin position="71"/>
        <end position="80"/>
    </location>
</feature>
<feature type="strand" evidence="7">
    <location>
        <begin position="83"/>
        <end position="87"/>
    </location>
</feature>
<feature type="helix" evidence="7">
    <location>
        <begin position="92"/>
        <end position="94"/>
    </location>
</feature>
<feature type="strand" evidence="7">
    <location>
        <begin position="96"/>
        <end position="103"/>
    </location>
</feature>
<feature type="strand" evidence="7">
    <location>
        <begin position="106"/>
        <end position="108"/>
    </location>
</feature>
<feature type="strand" evidence="7">
    <location>
        <begin position="112"/>
        <end position="118"/>
    </location>
</feature>
<feature type="strand" evidence="7">
    <location>
        <begin position="120"/>
        <end position="127"/>
    </location>
</feature>
<feature type="helix" evidence="7">
    <location>
        <begin position="130"/>
        <end position="142"/>
    </location>
</feature>
<feature type="strand" evidence="7">
    <location>
        <begin position="148"/>
        <end position="150"/>
    </location>
</feature>
<feature type="helix" evidence="7">
    <location>
        <begin position="156"/>
        <end position="158"/>
    </location>
</feature>
<feature type="turn" evidence="7">
    <location>
        <begin position="159"/>
        <end position="161"/>
    </location>
</feature>
<feature type="helix" evidence="7">
    <location>
        <begin position="164"/>
        <end position="175"/>
    </location>
</feature>
<feature type="strand" evidence="7">
    <location>
        <begin position="180"/>
        <end position="184"/>
    </location>
</feature>
<feature type="helix" evidence="7">
    <location>
        <begin position="187"/>
        <end position="189"/>
    </location>
</feature>
<feature type="helix" evidence="7">
    <location>
        <begin position="190"/>
        <end position="200"/>
    </location>
</feature>
<feature type="turn" evidence="7">
    <location>
        <begin position="201"/>
        <end position="203"/>
    </location>
</feature>
<feature type="helix" evidence="7">
    <location>
        <begin position="205"/>
        <end position="210"/>
    </location>
</feature>
<feature type="strand" evidence="7">
    <location>
        <begin position="214"/>
        <end position="218"/>
    </location>
</feature>
<feature type="turn" evidence="7">
    <location>
        <begin position="222"/>
        <end position="224"/>
    </location>
</feature>
<feature type="helix" evidence="7">
    <location>
        <begin position="228"/>
        <end position="240"/>
    </location>
</feature>
<feature type="strand" evidence="7">
    <location>
        <begin position="244"/>
        <end position="248"/>
    </location>
</feature>
<feature type="turn" evidence="8">
    <location>
        <begin position="253"/>
        <end position="255"/>
    </location>
</feature>
<feature type="helix" evidence="7">
    <location>
        <begin position="260"/>
        <end position="281"/>
    </location>
</feature>
<feature type="strand" evidence="7">
    <location>
        <begin position="287"/>
        <end position="291"/>
    </location>
</feature>
<feature type="turn" evidence="7">
    <location>
        <begin position="298"/>
        <end position="301"/>
    </location>
</feature>
<feature type="strand" evidence="7">
    <location>
        <begin position="305"/>
        <end position="307"/>
    </location>
</feature>
<feature type="helix" evidence="7">
    <location>
        <begin position="308"/>
        <end position="324"/>
    </location>
</feature>
<feature type="strand" evidence="7">
    <location>
        <begin position="328"/>
        <end position="331"/>
    </location>
</feature>
<feature type="strand" evidence="7">
    <location>
        <begin position="338"/>
        <end position="341"/>
    </location>
</feature>
<feature type="helix" evidence="7">
    <location>
        <begin position="342"/>
        <end position="358"/>
    </location>
</feature>
<feature type="strand" evidence="7">
    <location>
        <begin position="361"/>
        <end position="366"/>
    </location>
</feature>
<feature type="turn" evidence="7">
    <location>
        <begin position="370"/>
        <end position="373"/>
    </location>
</feature>
<feature type="strand" evidence="7">
    <location>
        <begin position="374"/>
        <end position="376"/>
    </location>
</feature>
<feature type="helix" evidence="7">
    <location>
        <begin position="377"/>
        <end position="393"/>
    </location>
</feature>
<feature type="helix" evidence="7">
    <location>
        <begin position="401"/>
        <end position="404"/>
    </location>
</feature>
<feature type="helix" evidence="7">
    <location>
        <begin position="406"/>
        <end position="412"/>
    </location>
</feature>
<feature type="strand" evidence="7">
    <location>
        <begin position="418"/>
        <end position="420"/>
    </location>
</feature>
<feature type="helix" evidence="7">
    <location>
        <begin position="422"/>
        <end position="426"/>
    </location>
</feature>
<feature type="turn" evidence="7">
    <location>
        <begin position="427"/>
        <end position="429"/>
    </location>
</feature>
<feature type="strand" evidence="7">
    <location>
        <begin position="435"/>
        <end position="437"/>
    </location>
</feature>
<feature type="helix" evidence="7">
    <location>
        <begin position="442"/>
        <end position="446"/>
    </location>
</feature>
<feature type="turn" evidence="7">
    <location>
        <begin position="447"/>
        <end position="449"/>
    </location>
</feature>
<feature type="helix" evidence="7">
    <location>
        <begin position="453"/>
        <end position="467"/>
    </location>
</feature>
<feature type="helix" evidence="7">
    <location>
        <begin position="475"/>
        <end position="493"/>
    </location>
</feature>
<accession>O93658</accession>
<sequence>MAKNNAVAGFNALNGVELNLFTTDELKAIHYATMEVLMDPGIQVSDPEARQIFKENGCEVNEKTNVVKIPEYLVRKALQLAPSRFVLWGRDKKFNTVQECGGKVHWTCFGTGVKVCKYQDGKYVTVDSVEKDIADIAKLCDWAENIDYFSLPVSARDIAGQGAQDVHETLTPLANTAKHFHHIDPVGENVEYYRDIVKAYYGGDEEEARKKPIFSMLLCPTSPLELSVNACQVIIKGARFGIPVNVLSMAMSGGSSPVYLAGTLVTHNAEVLSGIVLAQLTVPGAKVWYGSSTTTFDLKKGTAPVGSPELGLISAAVAKLAQFYGLPSYVAGSOSDAKVPDDQAGHEKTMTTLLPALAGANTIYGAGMLELGMTFSMEQLVIDNDIFSMVKKAMQGIPVSEETLAVESIQKVGIGNNFLALKQTRQLVDYPSNPMLLDRHMFGDWAAAGSKDLATVAHEKVEDVLKNHQVTPIDADIFKDMQAIVDKADKAFRGM</sequence>
<reference key="1">
    <citation type="journal article" date="2000" name="J. Bacteriol.">
        <title>The trimethylamine methyltransferase gene and multiple dimethylamine methyltransferase genes of Methanosarcina barkeri contain in-frame and read-through amber codons.</title>
        <authorList>
            <person name="Paul L."/>
            <person name="Ferguson D.J. Jr."/>
            <person name="Krzycki J.A."/>
        </authorList>
    </citation>
    <scope>NUCLEOTIDE SEQUENCE [GENOMIC DNA]</scope>
    <scope>PROTEIN SEQUENCE OF 2-18</scope>
    <scope>PATHWAY</scope>
    <scope>INDUCTION BY TRIMETHYLAMINE</scope>
    <source>
        <strain>ATCC 43569 / MS / DSM 800 / JCM 10043 / NBRC 100474</strain>
    </source>
</reference>
<reference key="2">
    <citation type="journal article" date="1997" name="J. Bacteriol.">
        <title>Reconstitution of trimethylamine-dependent coenzyme M methylation with the trimethylamine corrinoid protein and the isozymes of methyltransferase II from Methanosarcina barkeri.</title>
        <authorList>
            <person name="Ferguson D.J. Jr."/>
            <person name="Krzycki J.A."/>
        </authorList>
    </citation>
    <scope>FUNCTION</scope>
    <scope>CATALYTIC ACTIVITY</scope>
    <source>
        <strain>ATCC 43569 / MS / DSM 800 / JCM 10043 / NBRC 100474</strain>
    </source>
</reference>
<reference key="3">
    <citation type="journal article" date="2005" name="J. Biol. Chem.">
        <title>The residue mass of L-pyrrolysine in three distinct methylamine methyltransferases.</title>
        <authorList>
            <person name="Soares J.A."/>
            <person name="Zhang L."/>
            <person name="Pitsch R.L."/>
            <person name="Kleinholz N.M."/>
            <person name="Jones R.B."/>
            <person name="Wolff J.J."/>
            <person name="Amster J."/>
            <person name="Green-Church K.B."/>
            <person name="Krzycki J.A."/>
        </authorList>
    </citation>
    <scope>PYRROLYSINE AT PYL-334</scope>
    <source>
        <strain>ATCC 43569 / MS / DSM 800 / JCM 10043 / NBRC 100474</strain>
    </source>
</reference>
<gene>
    <name evidence="4" type="primary">mttB</name>
</gene>
<organism>
    <name type="scientific">Methanosarcina barkeri</name>
    <dbReference type="NCBI Taxonomy" id="2208"/>
    <lineage>
        <taxon>Archaea</taxon>
        <taxon>Methanobacteriati</taxon>
        <taxon>Methanobacteriota</taxon>
        <taxon>Stenosarchaea group</taxon>
        <taxon>Methanomicrobia</taxon>
        <taxon>Methanosarcinales</taxon>
        <taxon>Methanosarcinaceae</taxon>
        <taxon>Methanosarcina</taxon>
    </lineage>
</organism>
<proteinExistence type="evidence at protein level"/>
<protein>
    <recommendedName>
        <fullName>Trimethylamine methyltransferase MttB</fullName>
        <shortName>TMA methyltransferase</shortName>
        <ecNumber evidence="3">2.1.1.250</ecNumber>
    </recommendedName>
    <alternativeName>
        <fullName>Trimethylamine--corrinoid protein methyltransferase</fullName>
    </alternativeName>
</protein>
<name>MTTB_METBA</name>
<keyword id="KW-0002">3D-structure</keyword>
<keyword id="KW-0903">Direct protein sequencing</keyword>
<keyword id="KW-0484">Methanogenesis</keyword>
<keyword id="KW-0489">Methyltransferase</keyword>
<keyword id="KW-0669">Pyrrolysine</keyword>
<keyword id="KW-0808">Transferase</keyword>
<comment type="function">
    <text evidence="3">Catalyzes the transfer of a methyl group from trimethylamine to the corrinoid cofactor of MttC.</text>
</comment>
<comment type="catalytic activity">
    <reaction evidence="3">
        <text>Co(I)-[trimethylamine-specific corrinoid protein] + trimethylamine + H(+) = methyl-Co(III)-[trimethylamine-specific corrinoid protein] + dimethylamine</text>
        <dbReference type="Rhea" id="RHEA:39287"/>
        <dbReference type="Rhea" id="RHEA-COMP:11124"/>
        <dbReference type="Rhea" id="RHEA-COMP:11126"/>
        <dbReference type="ChEBI" id="CHEBI:15378"/>
        <dbReference type="ChEBI" id="CHEBI:58040"/>
        <dbReference type="ChEBI" id="CHEBI:58389"/>
        <dbReference type="ChEBI" id="CHEBI:85033"/>
        <dbReference type="ChEBI" id="CHEBI:85035"/>
        <dbReference type="EC" id="2.1.1.250"/>
    </reaction>
</comment>
<comment type="pathway">
    <text evidence="6">One-carbon metabolism; methanogenesis from trimethylamine.</text>
</comment>
<comment type="subunit">
    <text>Can form a complex with MttC.</text>
</comment>
<comment type="induction">
    <text evidence="1">Induced by growth on trimethylamine but not methanol or monomethylamine. Part of the mtbC-mttB-mttC and mtbC-mttB-mttC-mttP-mtbB1 operons.</text>
</comment>
<comment type="similarity">
    <text evidence="5">Belongs to the trimethylamine methyltransferase family.</text>
</comment>
<evidence type="ECO:0000269" key="1">
    <source>
    </source>
</evidence>
<evidence type="ECO:0000269" key="2">
    <source>
    </source>
</evidence>
<evidence type="ECO:0000269" key="3">
    <source>
    </source>
</evidence>
<evidence type="ECO:0000303" key="4">
    <source>
    </source>
</evidence>
<evidence type="ECO:0000305" key="5"/>
<evidence type="ECO:0000305" key="6">
    <source>
    </source>
</evidence>
<evidence type="ECO:0007829" key="7">
    <source>
        <dbReference type="PDB" id="7XCL"/>
    </source>
</evidence>
<evidence type="ECO:0007829" key="8">
    <source>
        <dbReference type="PDB" id="7XCN"/>
    </source>
</evidence>
<dbReference type="EC" id="2.1.1.250" evidence="3"/>
<dbReference type="EMBL" id="AF102623">
    <property type="protein sequence ID" value="AAD14630.2"/>
    <property type="molecule type" value="Genomic_DNA"/>
</dbReference>
<dbReference type="PDB" id="7XCL">
    <property type="method" value="X-ray"/>
    <property type="resolution" value="2.50 A"/>
    <property type="chains" value="A/B/C/D/E/F=1-495"/>
</dbReference>
<dbReference type="PDB" id="7XCM">
    <property type="method" value="X-ray"/>
    <property type="resolution" value="3.20 A"/>
    <property type="chains" value="A/B/C/D/E/F=1-495"/>
</dbReference>
<dbReference type="PDB" id="7XCN">
    <property type="method" value="X-ray"/>
    <property type="resolution" value="2.70 A"/>
    <property type="chains" value="A/B/C/D/E/F=1-495"/>
</dbReference>
<dbReference type="PDBsum" id="7XCL"/>
<dbReference type="PDBsum" id="7XCM"/>
<dbReference type="PDBsum" id="7XCN"/>
<dbReference type="SMR" id="O93658"/>
<dbReference type="KEGG" id="ag:AAD14630"/>
<dbReference type="BioCyc" id="MetaCyc:MONOMER-12208"/>
<dbReference type="BRENDA" id="2.1.1.250">
    <property type="organism ID" value="3250"/>
</dbReference>
<dbReference type="UniPathway" id="UPA00645"/>
<dbReference type="GO" id="GO:0043834">
    <property type="term" value="F:trimethylamine methyltransferase activity"/>
    <property type="evidence" value="ECO:0007669"/>
    <property type="project" value="UniProtKB-EC"/>
</dbReference>
<dbReference type="GO" id="GO:0015948">
    <property type="term" value="P:methanogenesis"/>
    <property type="evidence" value="ECO:0007669"/>
    <property type="project" value="UniProtKB-KW"/>
</dbReference>
<dbReference type="GO" id="GO:0032259">
    <property type="term" value="P:methylation"/>
    <property type="evidence" value="ECO:0007669"/>
    <property type="project" value="UniProtKB-KW"/>
</dbReference>
<dbReference type="FunFam" id="3.20.20.480:FF:000001">
    <property type="entry name" value="Trimethylamine methyltransferase"/>
    <property type="match status" value="1"/>
</dbReference>
<dbReference type="Gene3D" id="3.20.20.480">
    <property type="entry name" value="Trimethylamine methyltransferase-like"/>
    <property type="match status" value="1"/>
</dbReference>
<dbReference type="InterPro" id="IPR038601">
    <property type="entry name" value="MttB-like_sf"/>
</dbReference>
<dbReference type="InterPro" id="IPR012740">
    <property type="entry name" value="MttB_Methanosar"/>
</dbReference>
<dbReference type="InterPro" id="IPR010426">
    <property type="entry name" value="MTTB_MeTrfase"/>
</dbReference>
<dbReference type="NCBIfam" id="TIGR02369">
    <property type="entry name" value="trimeth_pyl"/>
    <property type="match status" value="1"/>
</dbReference>
<dbReference type="Pfam" id="PF06253">
    <property type="entry name" value="MTTB"/>
    <property type="match status" value="1"/>
</dbReference>
<dbReference type="PIRSF" id="PIRSF037567">
    <property type="entry name" value="MTTB_MeTrfase"/>
    <property type="match status" value="1"/>
</dbReference>